<gene>
    <name type="ordered locus">Sfum_3393</name>
</gene>
<organism>
    <name type="scientific">Syntrophobacter fumaroxidans (strain DSM 10017 / MPOB)</name>
    <dbReference type="NCBI Taxonomy" id="335543"/>
    <lineage>
        <taxon>Bacteria</taxon>
        <taxon>Pseudomonadati</taxon>
        <taxon>Thermodesulfobacteriota</taxon>
        <taxon>Syntrophobacteria</taxon>
        <taxon>Syntrophobacterales</taxon>
        <taxon>Syntrophobacteraceae</taxon>
        <taxon>Syntrophobacter</taxon>
    </lineage>
</organism>
<dbReference type="EC" id="4.2.1.-" evidence="1"/>
<dbReference type="EMBL" id="CP000478">
    <property type="protein sequence ID" value="ABK19066.1"/>
    <property type="molecule type" value="Genomic_DNA"/>
</dbReference>
<dbReference type="RefSeq" id="WP_011700191.1">
    <property type="nucleotide sequence ID" value="NC_008554.1"/>
</dbReference>
<dbReference type="SMR" id="A0LNR4"/>
<dbReference type="STRING" id="335543.Sfum_3393"/>
<dbReference type="KEGG" id="sfu:Sfum_3393"/>
<dbReference type="eggNOG" id="COG4336">
    <property type="taxonomic scope" value="Bacteria"/>
</dbReference>
<dbReference type="HOGENOM" id="CLU_059759_0_0_7"/>
<dbReference type="InParanoid" id="A0LNR4"/>
<dbReference type="OrthoDB" id="149585at2"/>
<dbReference type="Proteomes" id="UP000001784">
    <property type="component" value="Chromosome"/>
</dbReference>
<dbReference type="GO" id="GO:0016829">
    <property type="term" value="F:lyase activity"/>
    <property type="evidence" value="ECO:0007669"/>
    <property type="project" value="UniProtKB-KW"/>
</dbReference>
<dbReference type="FunFam" id="3.30.2040.10:FF:000001">
    <property type="entry name" value="D-glutamate cyclase, mitochondrial"/>
    <property type="match status" value="1"/>
</dbReference>
<dbReference type="Gene3D" id="3.40.1640.10">
    <property type="entry name" value="PSTPO5379-like"/>
    <property type="match status" value="1"/>
</dbReference>
<dbReference type="Gene3D" id="3.30.2040.10">
    <property type="entry name" value="PSTPO5379-like domain"/>
    <property type="match status" value="1"/>
</dbReference>
<dbReference type="HAMAP" id="MF_01830">
    <property type="entry name" value="Hydro_lyase"/>
    <property type="match status" value="1"/>
</dbReference>
<dbReference type="InterPro" id="IPR009906">
    <property type="entry name" value="D-Glu_cyclase"/>
</dbReference>
<dbReference type="InterPro" id="IPR038021">
    <property type="entry name" value="Putative_hydro-lyase"/>
</dbReference>
<dbReference type="InterPro" id="IPR016938">
    <property type="entry name" value="UPF0317"/>
</dbReference>
<dbReference type="NCBIfam" id="NF003969">
    <property type="entry name" value="PRK05463.1"/>
    <property type="match status" value="1"/>
</dbReference>
<dbReference type="PANTHER" id="PTHR32022">
    <property type="entry name" value="D-GLUTAMATE CYCLASE, MITOCHONDRIAL"/>
    <property type="match status" value="1"/>
</dbReference>
<dbReference type="PANTHER" id="PTHR32022:SF10">
    <property type="entry name" value="D-GLUTAMATE CYCLASE, MITOCHONDRIAL"/>
    <property type="match status" value="1"/>
</dbReference>
<dbReference type="Pfam" id="PF07286">
    <property type="entry name" value="D-Glu_cyclase"/>
    <property type="match status" value="1"/>
</dbReference>
<dbReference type="PIRSF" id="PIRSF029755">
    <property type="entry name" value="UCP029755"/>
    <property type="match status" value="1"/>
</dbReference>
<dbReference type="SUPFAM" id="SSF160920">
    <property type="entry name" value="PSTPO5379-like"/>
    <property type="match status" value="1"/>
</dbReference>
<feature type="chain" id="PRO_0000379869" description="Putative hydro-lyase Sfum_3393">
    <location>
        <begin position="1"/>
        <end position="261"/>
    </location>
</feature>
<protein>
    <recommendedName>
        <fullName evidence="1">Putative hydro-lyase Sfum_3393</fullName>
        <ecNumber evidence="1">4.2.1.-</ecNumber>
    </recommendedName>
</protein>
<reference key="1">
    <citation type="submission" date="2006-10" db="EMBL/GenBank/DDBJ databases">
        <title>Complete sequence of Syntrophobacter fumaroxidans MPOB.</title>
        <authorList>
            <consortium name="US DOE Joint Genome Institute"/>
            <person name="Copeland A."/>
            <person name="Lucas S."/>
            <person name="Lapidus A."/>
            <person name="Barry K."/>
            <person name="Detter J.C."/>
            <person name="Glavina del Rio T."/>
            <person name="Hammon N."/>
            <person name="Israni S."/>
            <person name="Pitluck S."/>
            <person name="Goltsman E.G."/>
            <person name="Martinez M."/>
            <person name="Schmutz J."/>
            <person name="Larimer F."/>
            <person name="Land M."/>
            <person name="Hauser L."/>
            <person name="Kyrpides N."/>
            <person name="Kim E."/>
            <person name="Boone D.R."/>
            <person name="Brockman F."/>
            <person name="Culley D."/>
            <person name="Ferry J."/>
            <person name="Gunsalus R."/>
            <person name="McInerney M.J."/>
            <person name="Morrison M."/>
            <person name="Plugge C."/>
            <person name="Rohlin L."/>
            <person name="Scholten J."/>
            <person name="Sieber J."/>
            <person name="Stams A.J.M."/>
            <person name="Worm P."/>
            <person name="Henstra A.M."/>
            <person name="Richardson P."/>
        </authorList>
    </citation>
    <scope>NUCLEOTIDE SEQUENCE [LARGE SCALE GENOMIC DNA]</scope>
    <source>
        <strain>DSM 10017 / MPOB</strain>
    </source>
</reference>
<accession>A0LNR4</accession>
<proteinExistence type="inferred from homology"/>
<comment type="similarity">
    <text evidence="1">Belongs to the D-glutamate cyclase family.</text>
</comment>
<keyword id="KW-0456">Lyase</keyword>
<keyword id="KW-1185">Reference proteome</keyword>
<sequence length="261" mass="28234">MTGMESPRDIRARIARSQWTKPTTGLAPAYAQANVVILDRRYAFDFLLFCVRNSKPCPILEVLEPGVTEPHATAPGADIRTDVPLYRVWRKGRLEQEATDITGCFDAGMVSFLLGCSFTFEASLTGAGVPVRNIEEGKNVSMYVTNRKCASAGPFSAPLVVTMRPIPNDLVMRAVRITSRYSLAHGAPIQVGDPGALGIRDLDRPDFGDPVTVKDGETPVFWACGVTSSLAVLSAEPELCITHAPGHMFITDVLNETLAAL</sequence>
<name>Y3393_SYNFM</name>
<evidence type="ECO:0000255" key="1">
    <source>
        <dbReference type="HAMAP-Rule" id="MF_01830"/>
    </source>
</evidence>